<reference key="1">
    <citation type="journal article" date="2011" name="J. Bacteriol.">
        <title>Comparative genomics of 28 Salmonella enterica isolates: evidence for CRISPR-mediated adaptive sublineage evolution.</title>
        <authorList>
            <person name="Fricke W.F."/>
            <person name="Mammel M.K."/>
            <person name="McDermott P.F."/>
            <person name="Tartera C."/>
            <person name="White D.G."/>
            <person name="Leclerc J.E."/>
            <person name="Ravel J."/>
            <person name="Cebula T.A."/>
        </authorList>
    </citation>
    <scope>NUCLEOTIDE SEQUENCE [LARGE SCALE GENOMIC DNA]</scope>
    <source>
        <strain>CVM19633</strain>
    </source>
</reference>
<name>HUTU_SALSV</name>
<sequence length="561" mass="61466">MPESKYRQQTIRAPRGTVLTAKSWLTEAPLRMLMNNLDPDVAENPHELVVYGGIGRAARNWECYDAIVDALTRLEADETLLIQSGKPVGVFKTHDNAPRVLIANSNLVPHWATWEHFNELDAKGLAMYGQMTAGSWIYIGSQGIVQGTYETFVEAGRQHYNGTLAGRWVLTAGLGGMGGAQPLAATLAGACSLTIECQQSRIDFRLRTRYVDEQAATLDDALARITRYTREGKAVSVALCANAADILPELVNRGVRPDLVTDQTSAHDPLHGYLPSGWRWEEYQKNAQSDPHGTMQAAKRSMAAHVRAMLAFSQMGVPTFDYGNNIRQMAKEMGVENAFDFPGFVPAYIRPLFCRGIGPFRWVALSGDPQDIYKTDAKVKEIVAEDKHLHHWLDMARERIHFQGLPARICWVGLEWRQKLGLAFNEMVRCGEVSAPIVIGRDHLDSGSVASPNRETEAMRDGSDAVSDWPLLNALLNTASGATWVSLHHGGGVGMGFSQHAGMVIVCDGTDEAAARIRRVLHNDPATGVMRHADAGYDLAVECAVEQGLNLPMVAATQGKG</sequence>
<organism>
    <name type="scientific">Salmonella schwarzengrund (strain CVM19633)</name>
    <dbReference type="NCBI Taxonomy" id="439843"/>
    <lineage>
        <taxon>Bacteria</taxon>
        <taxon>Pseudomonadati</taxon>
        <taxon>Pseudomonadota</taxon>
        <taxon>Gammaproteobacteria</taxon>
        <taxon>Enterobacterales</taxon>
        <taxon>Enterobacteriaceae</taxon>
        <taxon>Salmonella</taxon>
    </lineage>
</organism>
<accession>B4TQT5</accession>
<evidence type="ECO:0000255" key="1">
    <source>
        <dbReference type="HAMAP-Rule" id="MF_00577"/>
    </source>
</evidence>
<proteinExistence type="inferred from homology"/>
<dbReference type="EC" id="4.2.1.49" evidence="1"/>
<dbReference type="EMBL" id="CP001127">
    <property type="protein sequence ID" value="ACF89848.1"/>
    <property type="molecule type" value="Genomic_DNA"/>
</dbReference>
<dbReference type="RefSeq" id="WP_001115217.1">
    <property type="nucleotide sequence ID" value="NC_011094.1"/>
</dbReference>
<dbReference type="SMR" id="B4TQT5"/>
<dbReference type="KEGG" id="sew:SeSA_A0940"/>
<dbReference type="HOGENOM" id="CLU_018868_0_1_6"/>
<dbReference type="UniPathway" id="UPA00379">
    <property type="reaction ID" value="UER00550"/>
</dbReference>
<dbReference type="Proteomes" id="UP000001865">
    <property type="component" value="Chromosome"/>
</dbReference>
<dbReference type="GO" id="GO:0005737">
    <property type="term" value="C:cytoplasm"/>
    <property type="evidence" value="ECO:0007669"/>
    <property type="project" value="UniProtKB-SubCell"/>
</dbReference>
<dbReference type="GO" id="GO:0016153">
    <property type="term" value="F:urocanate hydratase activity"/>
    <property type="evidence" value="ECO:0007669"/>
    <property type="project" value="UniProtKB-UniRule"/>
</dbReference>
<dbReference type="GO" id="GO:0019556">
    <property type="term" value="P:L-histidine catabolic process to glutamate and formamide"/>
    <property type="evidence" value="ECO:0007669"/>
    <property type="project" value="UniProtKB-UniPathway"/>
</dbReference>
<dbReference type="GO" id="GO:0019557">
    <property type="term" value="P:L-histidine catabolic process to glutamate and formate"/>
    <property type="evidence" value="ECO:0007669"/>
    <property type="project" value="UniProtKB-UniPathway"/>
</dbReference>
<dbReference type="FunFam" id="3.40.50.10730:FF:000001">
    <property type="entry name" value="Urocanate hydratase"/>
    <property type="match status" value="1"/>
</dbReference>
<dbReference type="Gene3D" id="3.40.50.10730">
    <property type="entry name" value="Urocanase like domains"/>
    <property type="match status" value="1"/>
</dbReference>
<dbReference type="Gene3D" id="3.40.1770.10">
    <property type="entry name" value="Urocanase superfamily"/>
    <property type="match status" value="1"/>
</dbReference>
<dbReference type="HAMAP" id="MF_00577">
    <property type="entry name" value="HutU"/>
    <property type="match status" value="1"/>
</dbReference>
<dbReference type="InterPro" id="IPR055351">
    <property type="entry name" value="Urocanase"/>
</dbReference>
<dbReference type="InterPro" id="IPR023637">
    <property type="entry name" value="Urocanase-like"/>
</dbReference>
<dbReference type="InterPro" id="IPR035401">
    <property type="entry name" value="Urocanase_C"/>
</dbReference>
<dbReference type="InterPro" id="IPR038364">
    <property type="entry name" value="Urocanase_central_sf"/>
</dbReference>
<dbReference type="InterPro" id="IPR023636">
    <property type="entry name" value="Urocanase_CS"/>
</dbReference>
<dbReference type="InterPro" id="IPR035400">
    <property type="entry name" value="Urocanase_N"/>
</dbReference>
<dbReference type="InterPro" id="IPR035085">
    <property type="entry name" value="Urocanase_Rossmann-like"/>
</dbReference>
<dbReference type="InterPro" id="IPR036190">
    <property type="entry name" value="Urocanase_sf"/>
</dbReference>
<dbReference type="NCBIfam" id="TIGR01228">
    <property type="entry name" value="hutU"/>
    <property type="match status" value="1"/>
</dbReference>
<dbReference type="NCBIfam" id="NF003820">
    <property type="entry name" value="PRK05414.1"/>
    <property type="match status" value="1"/>
</dbReference>
<dbReference type="PANTHER" id="PTHR12216">
    <property type="entry name" value="UROCANATE HYDRATASE"/>
    <property type="match status" value="1"/>
</dbReference>
<dbReference type="PANTHER" id="PTHR12216:SF4">
    <property type="entry name" value="UROCANATE HYDRATASE"/>
    <property type="match status" value="1"/>
</dbReference>
<dbReference type="Pfam" id="PF01175">
    <property type="entry name" value="Urocanase"/>
    <property type="match status" value="1"/>
</dbReference>
<dbReference type="Pfam" id="PF17392">
    <property type="entry name" value="Urocanase_C"/>
    <property type="match status" value="1"/>
</dbReference>
<dbReference type="Pfam" id="PF17391">
    <property type="entry name" value="Urocanase_N"/>
    <property type="match status" value="1"/>
</dbReference>
<dbReference type="PIRSF" id="PIRSF001423">
    <property type="entry name" value="Urocanate_hydrat"/>
    <property type="match status" value="1"/>
</dbReference>
<dbReference type="SUPFAM" id="SSF111326">
    <property type="entry name" value="Urocanase"/>
    <property type="match status" value="1"/>
</dbReference>
<dbReference type="PROSITE" id="PS01233">
    <property type="entry name" value="UROCANASE"/>
    <property type="match status" value="1"/>
</dbReference>
<keyword id="KW-0963">Cytoplasm</keyword>
<keyword id="KW-0369">Histidine metabolism</keyword>
<keyword id="KW-0456">Lyase</keyword>
<keyword id="KW-0520">NAD</keyword>
<comment type="function">
    <text evidence="1">Catalyzes the conversion of urocanate to 4-imidazolone-5-propionate.</text>
</comment>
<comment type="catalytic activity">
    <reaction evidence="1">
        <text>4-imidazolone-5-propanoate = trans-urocanate + H2O</text>
        <dbReference type="Rhea" id="RHEA:13101"/>
        <dbReference type="ChEBI" id="CHEBI:15377"/>
        <dbReference type="ChEBI" id="CHEBI:17771"/>
        <dbReference type="ChEBI" id="CHEBI:77893"/>
        <dbReference type="EC" id="4.2.1.49"/>
    </reaction>
</comment>
<comment type="cofactor">
    <cofactor evidence="1">
        <name>NAD(+)</name>
        <dbReference type="ChEBI" id="CHEBI:57540"/>
    </cofactor>
    <text evidence="1">Binds 1 NAD(+) per subunit.</text>
</comment>
<comment type="pathway">
    <text evidence="1">Amino-acid degradation; L-histidine degradation into L-glutamate; N-formimidoyl-L-glutamate from L-histidine: step 2/3.</text>
</comment>
<comment type="subcellular location">
    <subcellularLocation>
        <location evidence="1">Cytoplasm</location>
    </subcellularLocation>
</comment>
<comment type="similarity">
    <text evidence="1">Belongs to the urocanase family.</text>
</comment>
<feature type="chain" id="PRO_1000129575" description="Urocanate hydratase">
    <location>
        <begin position="1"/>
        <end position="561"/>
    </location>
</feature>
<feature type="active site" evidence="1">
    <location>
        <position position="410"/>
    </location>
</feature>
<feature type="binding site" evidence="1">
    <location>
        <begin position="52"/>
        <end position="53"/>
    </location>
    <ligand>
        <name>NAD(+)</name>
        <dbReference type="ChEBI" id="CHEBI:57540"/>
    </ligand>
</feature>
<feature type="binding site" evidence="1">
    <location>
        <position position="130"/>
    </location>
    <ligand>
        <name>NAD(+)</name>
        <dbReference type="ChEBI" id="CHEBI:57540"/>
    </ligand>
</feature>
<feature type="binding site" evidence="1">
    <location>
        <begin position="176"/>
        <end position="178"/>
    </location>
    <ligand>
        <name>NAD(+)</name>
        <dbReference type="ChEBI" id="CHEBI:57540"/>
    </ligand>
</feature>
<feature type="binding site" evidence="1">
    <location>
        <position position="196"/>
    </location>
    <ligand>
        <name>NAD(+)</name>
        <dbReference type="ChEBI" id="CHEBI:57540"/>
    </ligand>
</feature>
<feature type="binding site" evidence="1">
    <location>
        <position position="201"/>
    </location>
    <ligand>
        <name>NAD(+)</name>
        <dbReference type="ChEBI" id="CHEBI:57540"/>
    </ligand>
</feature>
<feature type="binding site" evidence="1">
    <location>
        <begin position="242"/>
        <end position="243"/>
    </location>
    <ligand>
        <name>NAD(+)</name>
        <dbReference type="ChEBI" id="CHEBI:57540"/>
    </ligand>
</feature>
<feature type="binding site" evidence="1">
    <location>
        <begin position="263"/>
        <end position="267"/>
    </location>
    <ligand>
        <name>NAD(+)</name>
        <dbReference type="ChEBI" id="CHEBI:57540"/>
    </ligand>
</feature>
<feature type="binding site" evidence="1">
    <location>
        <begin position="273"/>
        <end position="274"/>
    </location>
    <ligand>
        <name>NAD(+)</name>
        <dbReference type="ChEBI" id="CHEBI:57540"/>
    </ligand>
</feature>
<feature type="binding site" evidence="1">
    <location>
        <position position="322"/>
    </location>
    <ligand>
        <name>NAD(+)</name>
        <dbReference type="ChEBI" id="CHEBI:57540"/>
    </ligand>
</feature>
<feature type="binding site" evidence="1">
    <location>
        <position position="492"/>
    </location>
    <ligand>
        <name>NAD(+)</name>
        <dbReference type="ChEBI" id="CHEBI:57540"/>
    </ligand>
</feature>
<protein>
    <recommendedName>
        <fullName evidence="1">Urocanate hydratase</fullName>
        <shortName evidence="1">Urocanase</shortName>
        <ecNumber evidence="1">4.2.1.49</ecNumber>
    </recommendedName>
    <alternativeName>
        <fullName evidence="1">Imidazolonepropionate hydrolase</fullName>
    </alternativeName>
</protein>
<gene>
    <name evidence="1" type="primary">hutU</name>
    <name type="ordered locus">SeSA_A0940</name>
</gene>